<protein>
    <recommendedName>
        <fullName evidence="1">Cysteine desulfurase</fullName>
        <ecNumber evidence="1">2.8.1.7</ecNumber>
    </recommendedName>
    <alternativeName>
        <fullName evidence="1">Selenocysteine beta-lyase</fullName>
        <shortName evidence="1">SCL</shortName>
    </alternativeName>
    <alternativeName>
        <fullName evidence="1">Selenocysteine lyase</fullName>
        <ecNumber evidence="1">4.4.1.16</ecNumber>
    </alternativeName>
    <alternativeName>
        <fullName evidence="1">Selenocysteine reductase</fullName>
    </alternativeName>
</protein>
<reference key="1">
    <citation type="journal article" date="2011" name="J. Bacteriol.">
        <title>Comparative genomics of 28 Salmonella enterica isolates: evidence for CRISPR-mediated adaptive sublineage evolution.</title>
        <authorList>
            <person name="Fricke W.F."/>
            <person name="Mammel M.K."/>
            <person name="McDermott P.F."/>
            <person name="Tartera C."/>
            <person name="White D.G."/>
            <person name="Leclerc J.E."/>
            <person name="Ravel J."/>
            <person name="Cebula T.A."/>
        </authorList>
    </citation>
    <scope>NUCLEOTIDE SEQUENCE [LARGE SCALE GENOMIC DNA]</scope>
    <source>
        <strain>SL483</strain>
    </source>
</reference>
<dbReference type="EC" id="2.8.1.7" evidence="1"/>
<dbReference type="EC" id="4.4.1.16" evidence="1"/>
<dbReference type="EMBL" id="CP001138">
    <property type="protein sequence ID" value="ACH53000.1"/>
    <property type="molecule type" value="Genomic_DNA"/>
</dbReference>
<dbReference type="RefSeq" id="WP_000143862.1">
    <property type="nucleotide sequence ID" value="NC_011149.1"/>
</dbReference>
<dbReference type="SMR" id="B5F7C4"/>
<dbReference type="KEGG" id="sea:SeAg_B1798"/>
<dbReference type="HOGENOM" id="CLU_003433_2_5_6"/>
<dbReference type="UniPathway" id="UPA00266"/>
<dbReference type="Proteomes" id="UP000008819">
    <property type="component" value="Chromosome"/>
</dbReference>
<dbReference type="GO" id="GO:0005737">
    <property type="term" value="C:cytoplasm"/>
    <property type="evidence" value="ECO:0007669"/>
    <property type="project" value="UniProtKB-SubCell"/>
</dbReference>
<dbReference type="GO" id="GO:0031071">
    <property type="term" value="F:cysteine desulfurase activity"/>
    <property type="evidence" value="ECO:0007669"/>
    <property type="project" value="UniProtKB-UniRule"/>
</dbReference>
<dbReference type="GO" id="GO:0030170">
    <property type="term" value="F:pyridoxal phosphate binding"/>
    <property type="evidence" value="ECO:0007669"/>
    <property type="project" value="InterPro"/>
</dbReference>
<dbReference type="GO" id="GO:0009000">
    <property type="term" value="F:selenocysteine lyase activity"/>
    <property type="evidence" value="ECO:0007669"/>
    <property type="project" value="UniProtKB-UniRule"/>
</dbReference>
<dbReference type="GO" id="GO:0006534">
    <property type="term" value="P:cysteine metabolic process"/>
    <property type="evidence" value="ECO:0007669"/>
    <property type="project" value="InterPro"/>
</dbReference>
<dbReference type="CDD" id="cd06453">
    <property type="entry name" value="SufS_like"/>
    <property type="match status" value="1"/>
</dbReference>
<dbReference type="FunFam" id="3.40.640.10:FF:000042">
    <property type="entry name" value="Cysteine desulfurase"/>
    <property type="match status" value="1"/>
</dbReference>
<dbReference type="Gene3D" id="3.90.1150.10">
    <property type="entry name" value="Aspartate Aminotransferase, domain 1"/>
    <property type="match status" value="1"/>
</dbReference>
<dbReference type="Gene3D" id="3.40.640.10">
    <property type="entry name" value="Type I PLP-dependent aspartate aminotransferase-like (Major domain)"/>
    <property type="match status" value="1"/>
</dbReference>
<dbReference type="HAMAP" id="MF_01831">
    <property type="entry name" value="SufS_aminotrans_5"/>
    <property type="match status" value="1"/>
</dbReference>
<dbReference type="InterPro" id="IPR000192">
    <property type="entry name" value="Aminotrans_V_dom"/>
</dbReference>
<dbReference type="InterPro" id="IPR020578">
    <property type="entry name" value="Aminotrans_V_PyrdxlP_BS"/>
</dbReference>
<dbReference type="InterPro" id="IPR010970">
    <property type="entry name" value="Cys_dSase_SufS"/>
</dbReference>
<dbReference type="InterPro" id="IPR015424">
    <property type="entry name" value="PyrdxlP-dep_Trfase"/>
</dbReference>
<dbReference type="InterPro" id="IPR015421">
    <property type="entry name" value="PyrdxlP-dep_Trfase_major"/>
</dbReference>
<dbReference type="InterPro" id="IPR015422">
    <property type="entry name" value="PyrdxlP-dep_Trfase_small"/>
</dbReference>
<dbReference type="NCBIfam" id="NF006791">
    <property type="entry name" value="PRK09295.1"/>
    <property type="match status" value="1"/>
</dbReference>
<dbReference type="NCBIfam" id="TIGR01979">
    <property type="entry name" value="sufS"/>
    <property type="match status" value="1"/>
</dbReference>
<dbReference type="PANTHER" id="PTHR43586">
    <property type="entry name" value="CYSTEINE DESULFURASE"/>
    <property type="match status" value="1"/>
</dbReference>
<dbReference type="PANTHER" id="PTHR43586:SF25">
    <property type="entry name" value="CYSTEINE DESULFURASE"/>
    <property type="match status" value="1"/>
</dbReference>
<dbReference type="Pfam" id="PF00266">
    <property type="entry name" value="Aminotran_5"/>
    <property type="match status" value="1"/>
</dbReference>
<dbReference type="SUPFAM" id="SSF53383">
    <property type="entry name" value="PLP-dependent transferases"/>
    <property type="match status" value="1"/>
</dbReference>
<dbReference type="PROSITE" id="PS00595">
    <property type="entry name" value="AA_TRANSFER_CLASS_5"/>
    <property type="match status" value="1"/>
</dbReference>
<keyword id="KW-0963">Cytoplasm</keyword>
<keyword id="KW-0456">Lyase</keyword>
<keyword id="KW-0663">Pyridoxal phosphate</keyword>
<keyword id="KW-0808">Transferase</keyword>
<comment type="function">
    <text evidence="1">Cysteine desulfurases mobilize the sulfur from L-cysteine to yield L-alanine, an essential step in sulfur metabolism for biosynthesis of a variety of sulfur-containing biomolecules. Component of the suf operon, which is activated and required under specific conditions such as oxidative stress and iron limitation. Acts as a potent selenocysteine lyase in vitro, that mobilizes selenium from L-selenocysteine. Selenocysteine lyase activity is however unsure in vivo.</text>
</comment>
<comment type="catalytic activity">
    <reaction evidence="1">
        <text>(sulfur carrier)-H + L-cysteine = (sulfur carrier)-SH + L-alanine</text>
        <dbReference type="Rhea" id="RHEA:43892"/>
        <dbReference type="Rhea" id="RHEA-COMP:14737"/>
        <dbReference type="Rhea" id="RHEA-COMP:14739"/>
        <dbReference type="ChEBI" id="CHEBI:29917"/>
        <dbReference type="ChEBI" id="CHEBI:35235"/>
        <dbReference type="ChEBI" id="CHEBI:57972"/>
        <dbReference type="ChEBI" id="CHEBI:64428"/>
        <dbReference type="EC" id="2.8.1.7"/>
    </reaction>
</comment>
<comment type="catalytic activity">
    <reaction evidence="1">
        <text>L-selenocysteine + AH2 = hydrogenselenide + L-alanine + A + H(+)</text>
        <dbReference type="Rhea" id="RHEA:11632"/>
        <dbReference type="ChEBI" id="CHEBI:13193"/>
        <dbReference type="ChEBI" id="CHEBI:15378"/>
        <dbReference type="ChEBI" id="CHEBI:17499"/>
        <dbReference type="ChEBI" id="CHEBI:29317"/>
        <dbReference type="ChEBI" id="CHEBI:57843"/>
        <dbReference type="ChEBI" id="CHEBI:57972"/>
        <dbReference type="EC" id="4.4.1.16"/>
    </reaction>
</comment>
<comment type="cofactor">
    <cofactor evidence="1">
        <name>pyridoxal 5'-phosphate</name>
        <dbReference type="ChEBI" id="CHEBI:597326"/>
    </cofactor>
</comment>
<comment type="pathway">
    <text evidence="1">Cofactor biosynthesis; iron-sulfur cluster biosynthesis.</text>
</comment>
<comment type="subunit">
    <text evidence="1">Homodimer. Interacts with SufE and the SufBCD complex composed of SufB, SufC and SufD. The interaction with SufE is required to mediate the direct transfer of the sulfur atom from the S-sulfanylcysteine.</text>
</comment>
<comment type="subcellular location">
    <subcellularLocation>
        <location evidence="1">Cytoplasm</location>
    </subcellularLocation>
</comment>
<comment type="similarity">
    <text evidence="1">Belongs to the class-V pyridoxal-phosphate-dependent aminotransferase family. Csd subfamily.</text>
</comment>
<proteinExistence type="inferred from homology"/>
<gene>
    <name evidence="1" type="primary">sufS</name>
    <name type="ordered locus">SeAg_B1798</name>
</gene>
<name>SUFS_SALA4</name>
<accession>B5F7C4</accession>
<evidence type="ECO:0000255" key="1">
    <source>
        <dbReference type="HAMAP-Rule" id="MF_01831"/>
    </source>
</evidence>
<feature type="chain" id="PRO_1000188304" description="Cysteine desulfurase">
    <location>
        <begin position="1"/>
        <end position="406"/>
    </location>
</feature>
<feature type="active site" description="Cysteine persulfide intermediate" evidence="1">
    <location>
        <position position="364"/>
    </location>
</feature>
<feature type="modified residue" description="N6-(pyridoxal phosphate)lysine" evidence="1">
    <location>
        <position position="226"/>
    </location>
</feature>
<organism>
    <name type="scientific">Salmonella agona (strain SL483)</name>
    <dbReference type="NCBI Taxonomy" id="454166"/>
    <lineage>
        <taxon>Bacteria</taxon>
        <taxon>Pseudomonadati</taxon>
        <taxon>Pseudomonadota</taxon>
        <taxon>Gammaproteobacteria</taxon>
        <taxon>Enterobacterales</taxon>
        <taxon>Enterobacteriaceae</taxon>
        <taxon>Salmonella</taxon>
    </lineage>
</organism>
<sequence length="406" mass="44490">MTFPVEKVRADFPILQREVNGLPLAYLDSAASAQKPNQVIDAESAFYRHGYAAVHRGIHTLSAQATESMENVRKQASRFINARSAEELVFVRGTTEGINLVANSWGTENIRAGDNIIISEMEHHANIVPWQMLCERKGAELRVIPLHPDGTLRLETLAALFDDRTRLLAITHVSNVLGTENPLPDMIALARQHGAKVLVDGAQAVMHHAVDVQALDCDFYVFSGHKLYGPTGIGILYVKEALLQEMPPWEGGGSMISTVSLTQGTTWAKAPWRFEAGTPNTGGIIGLGAAIDYVTSLGLDKIGDYEQMLMRYALEQLAQVPDITLYGPAQRLGVIAFNLGNHHAYDVGSFLDNYGIAVRTGHHCAMPLMAWYGVPAMCRASLAMYNTHEEVDRLVAGLTRIHRLLG</sequence>